<dbReference type="EMBL" id="X59282">
    <property type="protein sequence ID" value="CAA41973.1"/>
    <property type="molecule type" value="mRNA"/>
</dbReference>
<dbReference type="PIR" id="S16558">
    <property type="entry name" value="XKTO"/>
</dbReference>
<dbReference type="RefSeq" id="NP_001233934.1">
    <property type="nucleotide sequence ID" value="NM_001247005.3"/>
</dbReference>
<dbReference type="SMR" id="P01076"/>
<dbReference type="MEROPS" id="I37.001"/>
<dbReference type="PaxDb" id="4081-Solyc07g007250.2.1"/>
<dbReference type="EnsemblPlants" id="Solyc07g007250.3.1">
    <property type="protein sequence ID" value="Solyc07g007250.3.1"/>
    <property type="gene ID" value="Solyc07g007250.3"/>
</dbReference>
<dbReference type="GeneID" id="544286"/>
<dbReference type="Gramene" id="Solyc07g007250.3.1">
    <property type="protein sequence ID" value="Solyc07g007250.3.1"/>
    <property type="gene ID" value="Solyc07g007250.3"/>
</dbReference>
<dbReference type="KEGG" id="sly:544286"/>
<dbReference type="eggNOG" id="ENOG502R6I7">
    <property type="taxonomic scope" value="Eukaryota"/>
</dbReference>
<dbReference type="HOGENOM" id="CLU_198582_0_0_1"/>
<dbReference type="InParanoid" id="P01076"/>
<dbReference type="OMA" id="CGPYVGR"/>
<dbReference type="OrthoDB" id="1245163at2759"/>
<dbReference type="PhylomeDB" id="P01076"/>
<dbReference type="Proteomes" id="UP000004994">
    <property type="component" value="Chromosome 7"/>
</dbReference>
<dbReference type="GO" id="GO:0004866">
    <property type="term" value="F:endopeptidase inhibitor activity"/>
    <property type="evidence" value="ECO:0007669"/>
    <property type="project" value="InterPro"/>
</dbReference>
<dbReference type="InterPro" id="IPR004231">
    <property type="entry name" value="COpept_A_inh-like"/>
</dbReference>
<dbReference type="InterPro" id="IPR011052">
    <property type="entry name" value="Proteinase_amylase_inhib_sf"/>
</dbReference>
<dbReference type="Pfam" id="PF02977">
    <property type="entry name" value="CarbpepA_inh"/>
    <property type="match status" value="1"/>
</dbReference>
<dbReference type="SUPFAM" id="SSF57027">
    <property type="entry name" value="Plant inhibitors of proteinases and amylases"/>
    <property type="match status" value="1"/>
</dbReference>
<protein>
    <recommendedName>
        <fullName>Metallocarboxypeptidase inhibitor</fullName>
        <shortName>Carboxypeptidase inhibitor</shortName>
        <shortName>MCPI</shortName>
    </recommendedName>
</protein>
<feature type="signal peptide" evidence="2">
    <location>
        <begin position="1"/>
        <end position="32"/>
    </location>
</feature>
<feature type="chain" id="PRO_0000021662" description="Metallocarboxypeptidase inhibitor">
    <location>
        <begin position="33"/>
        <end position="69"/>
    </location>
</feature>
<feature type="propeptide" id="PRO_0000021663" description="Hydrophobic peptide">
    <location>
        <begin position="70"/>
        <end position="77"/>
    </location>
</feature>
<feature type="site" description="Interaction with carboxypeptidase" evidence="1">
    <location>
        <position position="69"/>
    </location>
</feature>
<feature type="modified residue" description="Pyrrolidone carboxylic acid" evidence="2">
    <location>
        <position position="33"/>
    </location>
</feature>
<feature type="disulfide bond" evidence="1">
    <location>
        <begin position="39"/>
        <end position="55"/>
    </location>
</feature>
<feature type="disulfide bond" evidence="1">
    <location>
        <begin position="43"/>
        <end position="58"/>
    </location>
</feature>
<feature type="disulfide bond" evidence="1">
    <location>
        <begin position="49"/>
        <end position="65"/>
    </location>
</feature>
<name>MCPI_SOLLC</name>
<accession>P01076</accession>
<sequence>MAQKFTILFTILLVVIAAQDVMAQDATLTKLFQQYDPVCHKPCSTQDDCSGGTFCQACWRFAGTCGPYVGRAMAIGV</sequence>
<comment type="function">
    <text>May play a defensive role against insect attacks.</text>
</comment>
<comment type="tissue specificity">
    <text>Ovaries.</text>
</comment>
<comment type="developmental stage">
    <text>Present at very high levels during anthesis in ovaries, decreases rapidly during fruit development.</text>
</comment>
<comment type="induction">
    <text>The MCPI RNA, but not its protein, is highly induced by wounding the leaves.</text>
</comment>
<comment type="domain">
    <text evidence="1">The presence of a 'disulfide through disulfide knot' structurally defines this protein as a knottin.</text>
</comment>
<comment type="similarity">
    <text evidence="3">To potato MCPI.</text>
</comment>
<comment type="caution">
    <text evidence="3">Besides the signal peptide, the N-terminal 32 AA may contain a propeptide sequence.</text>
</comment>
<evidence type="ECO:0000250" key="1"/>
<evidence type="ECO:0000269" key="2">
    <source>
    </source>
</evidence>
<evidence type="ECO:0000305" key="3"/>
<keyword id="KW-0903">Direct protein sequencing</keyword>
<keyword id="KW-1015">Disulfide bond</keyword>
<keyword id="KW-0960">Knottin</keyword>
<keyword id="KW-0481">Metalloenzyme inhibitor</keyword>
<keyword id="KW-0873">Pyrrolidone carboxylic acid</keyword>
<keyword id="KW-1185">Reference proteome</keyword>
<keyword id="KW-0732">Signal</keyword>
<reference key="1">
    <citation type="journal article" date="1991" name="Mol. Gen. Genet.">
        <title>Regulation of metallocarboxypeptidase inhibitor gene expression in tomato.</title>
        <authorList>
            <person name="Martineau B."/>
            <person name="McBride K.E."/>
            <person name="Houck C.M."/>
        </authorList>
    </citation>
    <scope>NUCLEOTIDE SEQUENCE [MRNA]</scope>
    <source>
        <strain>cv. UC82B</strain>
    </source>
</reference>
<reference key="2">
    <citation type="journal article" date="1981" name="Biochemistry">
        <title>Amino acid sequence of a carboxypeptidase inhibitor from tomato fruit.</title>
        <authorList>
            <person name="Hass G.M."/>
            <person name="Hermodson M.A."/>
        </authorList>
    </citation>
    <scope>PROTEIN SEQUENCE OF 33-69</scope>
    <scope>PYROGLUTAMATE FORMATION AT GLN-33</scope>
</reference>
<organism>
    <name type="scientific">Solanum lycopersicum</name>
    <name type="common">Tomato</name>
    <name type="synonym">Lycopersicon esculentum</name>
    <dbReference type="NCBI Taxonomy" id="4081"/>
    <lineage>
        <taxon>Eukaryota</taxon>
        <taxon>Viridiplantae</taxon>
        <taxon>Streptophyta</taxon>
        <taxon>Embryophyta</taxon>
        <taxon>Tracheophyta</taxon>
        <taxon>Spermatophyta</taxon>
        <taxon>Magnoliopsida</taxon>
        <taxon>eudicotyledons</taxon>
        <taxon>Gunneridae</taxon>
        <taxon>Pentapetalae</taxon>
        <taxon>asterids</taxon>
        <taxon>lamiids</taxon>
        <taxon>Solanales</taxon>
        <taxon>Solanaceae</taxon>
        <taxon>Solanoideae</taxon>
        <taxon>Solaneae</taxon>
        <taxon>Solanum</taxon>
        <taxon>Solanum subgen. Lycopersicon</taxon>
    </lineage>
</organism>
<proteinExistence type="evidence at protein level"/>